<feature type="chain" id="PRO_1000122415" description="Homoserine kinase">
    <location>
        <begin position="1"/>
        <end position="306"/>
    </location>
</feature>
<feature type="binding site" evidence="1">
    <location>
        <begin position="95"/>
        <end position="105"/>
    </location>
    <ligand>
        <name>ATP</name>
        <dbReference type="ChEBI" id="CHEBI:30616"/>
    </ligand>
</feature>
<name>KHSE_CORU7</name>
<proteinExistence type="inferred from homology"/>
<gene>
    <name evidence="1" type="primary">thrB</name>
    <name type="ordered locus">cu0695</name>
</gene>
<accession>B1VFW6</accession>
<reference key="1">
    <citation type="journal article" date="2008" name="J. Biotechnol.">
        <title>The lifestyle of Corynebacterium urealyticum derived from its complete genome sequence established by pyrosequencing.</title>
        <authorList>
            <person name="Tauch A."/>
            <person name="Trost E."/>
            <person name="Tilker A."/>
            <person name="Ludewig U."/>
            <person name="Schneiker S."/>
            <person name="Goesmann A."/>
            <person name="Arnold W."/>
            <person name="Bekel T."/>
            <person name="Brinkrolf K."/>
            <person name="Brune I."/>
            <person name="Goetker S."/>
            <person name="Kalinowski J."/>
            <person name="Kamp P.-B."/>
            <person name="Lobo F.P."/>
            <person name="Viehoever P."/>
            <person name="Weisshaar B."/>
            <person name="Soriano F."/>
            <person name="Droege M."/>
            <person name="Puehler A."/>
        </authorList>
    </citation>
    <scope>NUCLEOTIDE SEQUENCE [LARGE SCALE GENOMIC DNA]</scope>
    <source>
        <strain>ATCC 43042 / DSM 7109</strain>
    </source>
</reference>
<keyword id="KW-0028">Amino-acid biosynthesis</keyword>
<keyword id="KW-0067">ATP-binding</keyword>
<keyword id="KW-0963">Cytoplasm</keyword>
<keyword id="KW-0418">Kinase</keyword>
<keyword id="KW-0547">Nucleotide-binding</keyword>
<keyword id="KW-1185">Reference proteome</keyword>
<keyword id="KW-0791">Threonine biosynthesis</keyword>
<keyword id="KW-0808">Transferase</keyword>
<evidence type="ECO:0000255" key="1">
    <source>
        <dbReference type="HAMAP-Rule" id="MF_00384"/>
    </source>
</evidence>
<sequence length="306" mass="32375">MATEIPVGRKVRVKVPGSSANLGPGFDSLGLALSIYDHVEVEVIDSGLEVEVTGEGQGEVPLDERHLVVRAIRAGLKKADVIARGLRVRCNNSIPQSRGLGSSAAAAVSGVVAANALAGDVLDTDTIIQLASTFEGHPDNVAASVLGSAVVSWTNIPVDGTEPTYHASPVTVHPDIRATALIPNSHASTEAVRRVLPSDIPHLDARFNVSRTGVLLVALSKDPSLLWEGTRDRMHQPFRAEVLPISSEWVNRLRNQGYPAFLSGAGPTVLVLSTEPVEEALLQEARDRGIRVEELTVAGPVTVEDA</sequence>
<dbReference type="EC" id="2.7.1.39" evidence="1"/>
<dbReference type="EMBL" id="AM942444">
    <property type="protein sequence ID" value="CAQ04655.1"/>
    <property type="molecule type" value="Genomic_DNA"/>
</dbReference>
<dbReference type="RefSeq" id="WP_012359946.1">
    <property type="nucleotide sequence ID" value="NC_010545.1"/>
</dbReference>
<dbReference type="SMR" id="B1VFW6"/>
<dbReference type="STRING" id="504474.cu0695"/>
<dbReference type="GeneID" id="60603472"/>
<dbReference type="KEGG" id="cur:cu0695"/>
<dbReference type="eggNOG" id="COG0083">
    <property type="taxonomic scope" value="Bacteria"/>
</dbReference>
<dbReference type="HOGENOM" id="CLU_041243_0_1_11"/>
<dbReference type="UniPathway" id="UPA00050">
    <property type="reaction ID" value="UER00064"/>
</dbReference>
<dbReference type="Proteomes" id="UP000001727">
    <property type="component" value="Chromosome"/>
</dbReference>
<dbReference type="GO" id="GO:0005737">
    <property type="term" value="C:cytoplasm"/>
    <property type="evidence" value="ECO:0007669"/>
    <property type="project" value="UniProtKB-SubCell"/>
</dbReference>
<dbReference type="GO" id="GO:0005524">
    <property type="term" value="F:ATP binding"/>
    <property type="evidence" value="ECO:0007669"/>
    <property type="project" value="UniProtKB-UniRule"/>
</dbReference>
<dbReference type="GO" id="GO:0004413">
    <property type="term" value="F:homoserine kinase activity"/>
    <property type="evidence" value="ECO:0007669"/>
    <property type="project" value="UniProtKB-UniRule"/>
</dbReference>
<dbReference type="GO" id="GO:0009088">
    <property type="term" value="P:threonine biosynthetic process"/>
    <property type="evidence" value="ECO:0007669"/>
    <property type="project" value="UniProtKB-UniRule"/>
</dbReference>
<dbReference type="Gene3D" id="3.30.230.10">
    <property type="match status" value="1"/>
</dbReference>
<dbReference type="Gene3D" id="3.30.70.890">
    <property type="entry name" value="GHMP kinase, C-terminal domain"/>
    <property type="match status" value="1"/>
</dbReference>
<dbReference type="HAMAP" id="MF_00384">
    <property type="entry name" value="Homoser_kinase"/>
    <property type="match status" value="1"/>
</dbReference>
<dbReference type="InterPro" id="IPR013750">
    <property type="entry name" value="GHMP_kinase_C_dom"/>
</dbReference>
<dbReference type="InterPro" id="IPR036554">
    <property type="entry name" value="GHMP_kinase_C_sf"/>
</dbReference>
<dbReference type="InterPro" id="IPR006204">
    <property type="entry name" value="GHMP_kinase_N_dom"/>
</dbReference>
<dbReference type="InterPro" id="IPR006203">
    <property type="entry name" value="GHMP_knse_ATP-bd_CS"/>
</dbReference>
<dbReference type="InterPro" id="IPR000870">
    <property type="entry name" value="Homoserine_kinase"/>
</dbReference>
<dbReference type="InterPro" id="IPR020568">
    <property type="entry name" value="Ribosomal_Su5_D2-typ_SF"/>
</dbReference>
<dbReference type="InterPro" id="IPR014721">
    <property type="entry name" value="Ribsml_uS5_D2-typ_fold_subgr"/>
</dbReference>
<dbReference type="NCBIfam" id="TIGR00191">
    <property type="entry name" value="thrB"/>
    <property type="match status" value="1"/>
</dbReference>
<dbReference type="PANTHER" id="PTHR20861:SF1">
    <property type="entry name" value="HOMOSERINE KINASE"/>
    <property type="match status" value="1"/>
</dbReference>
<dbReference type="PANTHER" id="PTHR20861">
    <property type="entry name" value="HOMOSERINE/4-DIPHOSPHOCYTIDYL-2-C-METHYL-D-ERYTHRITOL KINASE"/>
    <property type="match status" value="1"/>
</dbReference>
<dbReference type="Pfam" id="PF08544">
    <property type="entry name" value="GHMP_kinases_C"/>
    <property type="match status" value="1"/>
</dbReference>
<dbReference type="Pfam" id="PF00288">
    <property type="entry name" value="GHMP_kinases_N"/>
    <property type="match status" value="1"/>
</dbReference>
<dbReference type="PIRSF" id="PIRSF000676">
    <property type="entry name" value="Homoser_kin"/>
    <property type="match status" value="1"/>
</dbReference>
<dbReference type="PRINTS" id="PR00958">
    <property type="entry name" value="HOMSERKINASE"/>
</dbReference>
<dbReference type="SUPFAM" id="SSF55060">
    <property type="entry name" value="GHMP Kinase, C-terminal domain"/>
    <property type="match status" value="1"/>
</dbReference>
<dbReference type="SUPFAM" id="SSF54211">
    <property type="entry name" value="Ribosomal protein S5 domain 2-like"/>
    <property type="match status" value="1"/>
</dbReference>
<dbReference type="PROSITE" id="PS00627">
    <property type="entry name" value="GHMP_KINASES_ATP"/>
    <property type="match status" value="1"/>
</dbReference>
<organism>
    <name type="scientific">Corynebacterium urealyticum (strain ATCC 43042 / DSM 7109)</name>
    <dbReference type="NCBI Taxonomy" id="504474"/>
    <lineage>
        <taxon>Bacteria</taxon>
        <taxon>Bacillati</taxon>
        <taxon>Actinomycetota</taxon>
        <taxon>Actinomycetes</taxon>
        <taxon>Mycobacteriales</taxon>
        <taxon>Corynebacteriaceae</taxon>
        <taxon>Corynebacterium</taxon>
    </lineage>
</organism>
<comment type="function">
    <text evidence="1">Catalyzes the ATP-dependent phosphorylation of L-homoserine to L-homoserine phosphate.</text>
</comment>
<comment type="catalytic activity">
    <reaction evidence="1">
        <text>L-homoserine + ATP = O-phospho-L-homoserine + ADP + H(+)</text>
        <dbReference type="Rhea" id="RHEA:13985"/>
        <dbReference type="ChEBI" id="CHEBI:15378"/>
        <dbReference type="ChEBI" id="CHEBI:30616"/>
        <dbReference type="ChEBI" id="CHEBI:57476"/>
        <dbReference type="ChEBI" id="CHEBI:57590"/>
        <dbReference type="ChEBI" id="CHEBI:456216"/>
        <dbReference type="EC" id="2.7.1.39"/>
    </reaction>
</comment>
<comment type="pathway">
    <text evidence="1">Amino-acid biosynthesis; L-threonine biosynthesis; L-threonine from L-aspartate: step 4/5.</text>
</comment>
<comment type="subcellular location">
    <subcellularLocation>
        <location evidence="1">Cytoplasm</location>
    </subcellularLocation>
</comment>
<comment type="similarity">
    <text evidence="1">Belongs to the GHMP kinase family. Homoserine kinase subfamily.</text>
</comment>
<protein>
    <recommendedName>
        <fullName evidence="1">Homoserine kinase</fullName>
        <shortName evidence="1">HK</shortName>
        <shortName evidence="1">HSK</shortName>
        <ecNumber evidence="1">2.7.1.39</ecNumber>
    </recommendedName>
</protein>